<proteinExistence type="evidence at protein level"/>
<organism>
    <name type="scientific">Mus musculus</name>
    <name type="common">Mouse</name>
    <dbReference type="NCBI Taxonomy" id="10090"/>
    <lineage>
        <taxon>Eukaryota</taxon>
        <taxon>Metazoa</taxon>
        <taxon>Chordata</taxon>
        <taxon>Craniata</taxon>
        <taxon>Vertebrata</taxon>
        <taxon>Euteleostomi</taxon>
        <taxon>Mammalia</taxon>
        <taxon>Eutheria</taxon>
        <taxon>Euarchontoglires</taxon>
        <taxon>Glires</taxon>
        <taxon>Rodentia</taxon>
        <taxon>Myomorpha</taxon>
        <taxon>Muroidea</taxon>
        <taxon>Muridae</taxon>
        <taxon>Murinae</taxon>
        <taxon>Mus</taxon>
        <taxon>Mus</taxon>
    </lineage>
</organism>
<comment type="function">
    <text evidence="2">Protein-lysine methyltransferase that selectively catalyzes the trimethylation of EEF1A at 'Lys-79'.</text>
</comment>
<comment type="catalytic activity">
    <reaction evidence="1">
        <text>L-lysyl-[protein] + 3 S-adenosyl-L-methionine = N(6),N(6),N(6)-trimethyl-L-lysyl-[protein] + 3 S-adenosyl-L-homocysteine + 3 H(+)</text>
        <dbReference type="Rhea" id="RHEA:54192"/>
        <dbReference type="Rhea" id="RHEA-COMP:9752"/>
        <dbReference type="Rhea" id="RHEA-COMP:13826"/>
        <dbReference type="ChEBI" id="CHEBI:15378"/>
        <dbReference type="ChEBI" id="CHEBI:29969"/>
        <dbReference type="ChEBI" id="CHEBI:57856"/>
        <dbReference type="ChEBI" id="CHEBI:59789"/>
        <dbReference type="ChEBI" id="CHEBI:61961"/>
    </reaction>
    <physiologicalReaction direction="left-to-right" evidence="1">
        <dbReference type="Rhea" id="RHEA:54193"/>
    </physiologicalReaction>
</comment>
<comment type="subcellular location">
    <subcellularLocation>
        <location evidence="2">Cytoplasm</location>
    </subcellularLocation>
</comment>
<comment type="similarity">
    <text evidence="2">Belongs to the class I-like SAM-binding methyltransferase superfamily. EFM5 family.</text>
</comment>
<comment type="caution">
    <text evidence="2">Was originally thought to be an N(6)-adenine-specific DNA methyltransferase based on primary sequence and predicted secondary structure.</text>
</comment>
<comment type="sequence caution" evidence="3">
    <conflict type="erroneous initiation">
        <sequence resource="EMBL-CDS" id="AAH51925"/>
    </conflict>
    <text>Extended N-terminus.</text>
</comment>
<comment type="sequence caution" evidence="3">
    <conflict type="erroneous initiation">
        <sequence resource="EMBL-CDS" id="BAB23947"/>
    </conflict>
    <text>Extended N-terminus.</text>
</comment>
<comment type="sequence caution" evidence="3">
    <conflict type="erroneous initiation">
        <sequence resource="EMBL-CDS" id="BAB28017"/>
    </conflict>
    <text>Extended N-terminus.</text>
</comment>
<accession>Q9CY45</accession>
<accession>Q9CQR0</accession>
<keyword id="KW-0007">Acetylation</keyword>
<keyword id="KW-0963">Cytoplasm</keyword>
<keyword id="KW-0489">Methyltransferase</keyword>
<keyword id="KW-0597">Phosphoprotein</keyword>
<keyword id="KW-1185">Reference proteome</keyword>
<keyword id="KW-0808">Transferase</keyword>
<name>EFMT1_MOUSE</name>
<dbReference type="EC" id="2.1.1.-" evidence="2"/>
<dbReference type="EMBL" id="AK005312">
    <property type="protein sequence ID" value="BAB23947.1"/>
    <property type="status" value="ALT_INIT"/>
    <property type="molecule type" value="mRNA"/>
</dbReference>
<dbReference type="EMBL" id="AK010911">
    <property type="protein sequence ID" value="BAB27262.1"/>
    <property type="molecule type" value="mRNA"/>
</dbReference>
<dbReference type="EMBL" id="AK012083">
    <property type="protein sequence ID" value="BAB28017.1"/>
    <property type="status" value="ALT_INIT"/>
    <property type="molecule type" value="mRNA"/>
</dbReference>
<dbReference type="EMBL" id="BC051925">
    <property type="protein sequence ID" value="AAH51925.1"/>
    <property type="status" value="ALT_INIT"/>
    <property type="molecule type" value="mRNA"/>
</dbReference>
<dbReference type="CCDS" id="CCDS27157.2"/>
<dbReference type="RefSeq" id="NP_080802.2">
    <property type="nucleotide sequence ID" value="NM_026526.3"/>
</dbReference>
<dbReference type="RefSeq" id="XP_006519546.1">
    <property type="nucleotide sequence ID" value="XM_006519483.4"/>
</dbReference>
<dbReference type="RefSeq" id="XP_036014727.1">
    <property type="nucleotide sequence ID" value="XM_036158834.1"/>
</dbReference>
<dbReference type="FunCoup" id="Q9CY45">
    <property type="interactions" value="932"/>
</dbReference>
<dbReference type="STRING" id="10090.ENSMUSP00000022518"/>
<dbReference type="iPTMnet" id="Q9CY45"/>
<dbReference type="PhosphoSitePlus" id="Q9CY45"/>
<dbReference type="jPOST" id="Q9CY45"/>
<dbReference type="PaxDb" id="10090-ENSMUSP00000022518"/>
<dbReference type="PeptideAtlas" id="Q9CY45"/>
<dbReference type="ProteomicsDB" id="275442"/>
<dbReference type="Pumba" id="Q9CY45"/>
<dbReference type="Antibodypedia" id="22330">
    <property type="antibodies" value="82 antibodies from 15 providers"/>
</dbReference>
<dbReference type="DNASU" id="68043"/>
<dbReference type="Ensembl" id="ENSMUST00000239099.2">
    <property type="protein sequence ID" value="ENSMUSP00000159159.2"/>
    <property type="gene ID" value="ENSMUSG00000021951.8"/>
</dbReference>
<dbReference type="GeneID" id="68043"/>
<dbReference type="KEGG" id="mmu:68043"/>
<dbReference type="UCSC" id="uc007udd.1">
    <property type="organism name" value="mouse"/>
</dbReference>
<dbReference type="AGR" id="MGI:1915293"/>
<dbReference type="CTD" id="221143"/>
<dbReference type="MGI" id="MGI:1915293">
    <property type="gene designation" value="Eef1akmt1"/>
</dbReference>
<dbReference type="VEuPathDB" id="HostDB:ENSMUSG00000021951"/>
<dbReference type="eggNOG" id="KOG3350">
    <property type="taxonomic scope" value="Eukaryota"/>
</dbReference>
<dbReference type="GeneTree" id="ENSGT00390000016366"/>
<dbReference type="InParanoid" id="Q9CY45"/>
<dbReference type="OrthoDB" id="206354at2759"/>
<dbReference type="PhylomeDB" id="Q9CY45"/>
<dbReference type="TreeFam" id="TF106153"/>
<dbReference type="Reactome" id="R-MMU-8876725">
    <property type="pathway name" value="Protein methylation"/>
</dbReference>
<dbReference type="BioGRID-ORCS" id="68043">
    <property type="hits" value="2 hits in 77 CRISPR screens"/>
</dbReference>
<dbReference type="ChiTaRS" id="Eef1akmt1">
    <property type="organism name" value="mouse"/>
</dbReference>
<dbReference type="PRO" id="PR:Q9CY45"/>
<dbReference type="Proteomes" id="UP000000589">
    <property type="component" value="Chromosome 14"/>
</dbReference>
<dbReference type="RNAct" id="Q9CY45">
    <property type="molecule type" value="protein"/>
</dbReference>
<dbReference type="Bgee" id="ENSMUSG00000021951">
    <property type="expression patterns" value="Expressed in facial nucleus and 262 other cell types or tissues"/>
</dbReference>
<dbReference type="ExpressionAtlas" id="Q9CY45">
    <property type="expression patterns" value="baseline and differential"/>
</dbReference>
<dbReference type="GO" id="GO:0005737">
    <property type="term" value="C:cytoplasm"/>
    <property type="evidence" value="ECO:0007669"/>
    <property type="project" value="UniProtKB-SubCell"/>
</dbReference>
<dbReference type="GO" id="GO:0008168">
    <property type="term" value="F:methyltransferase activity"/>
    <property type="evidence" value="ECO:0000250"/>
    <property type="project" value="UniProtKB"/>
</dbReference>
<dbReference type="GO" id="GO:0003676">
    <property type="term" value="F:nucleic acid binding"/>
    <property type="evidence" value="ECO:0007669"/>
    <property type="project" value="InterPro"/>
</dbReference>
<dbReference type="GO" id="GO:0016279">
    <property type="term" value="F:protein-lysine N-methyltransferase activity"/>
    <property type="evidence" value="ECO:0000250"/>
    <property type="project" value="UniProtKB"/>
</dbReference>
<dbReference type="GO" id="GO:0018022">
    <property type="term" value="P:peptidyl-lysine methylation"/>
    <property type="evidence" value="ECO:0000250"/>
    <property type="project" value="UniProtKB"/>
</dbReference>
<dbReference type="HAMAP" id="MF_03187">
    <property type="entry name" value="Methyltr_EFM5"/>
    <property type="match status" value="1"/>
</dbReference>
<dbReference type="InterPro" id="IPR002052">
    <property type="entry name" value="DNA_methylase_N6_adenine_CS"/>
</dbReference>
<dbReference type="InterPro" id="IPR019369">
    <property type="entry name" value="Efm5/EEF1AKMT1"/>
</dbReference>
<dbReference type="InterPro" id="IPR041370">
    <property type="entry name" value="Mlase_EEF1AKMT1/ZCCHC4"/>
</dbReference>
<dbReference type="InterPro" id="IPR029063">
    <property type="entry name" value="SAM-dependent_MTases_sf"/>
</dbReference>
<dbReference type="PANTHER" id="PTHR13200">
    <property type="entry name" value="EEF1A LYSINE METHYLTRANSFERASE 1"/>
    <property type="match status" value="1"/>
</dbReference>
<dbReference type="PANTHER" id="PTHR13200:SF0">
    <property type="entry name" value="EEF1A LYSINE METHYLTRANSFERASE 1"/>
    <property type="match status" value="1"/>
</dbReference>
<dbReference type="Pfam" id="PF10237">
    <property type="entry name" value="N6-adenineMlase"/>
    <property type="match status" value="1"/>
</dbReference>
<dbReference type="SUPFAM" id="SSF53335">
    <property type="entry name" value="S-adenosyl-L-methionine-dependent methyltransferases"/>
    <property type="match status" value="1"/>
</dbReference>
<gene>
    <name evidence="2 4" type="primary">Eef1akmt1</name>
    <name evidence="2" type="synonym">N6amt2</name>
</gene>
<evidence type="ECO:0000250" key="1">
    <source>
        <dbReference type="UniProtKB" id="Q8WVE0"/>
    </source>
</evidence>
<evidence type="ECO:0000255" key="2">
    <source>
        <dbReference type="HAMAP-Rule" id="MF_03187"/>
    </source>
</evidence>
<evidence type="ECO:0000305" key="3"/>
<evidence type="ECO:0000312" key="4">
    <source>
        <dbReference type="MGI" id="MGI:1915293"/>
    </source>
</evidence>
<feature type="initiator methionine" description="Removed" evidence="1">
    <location>
        <position position="1"/>
    </location>
</feature>
<feature type="chain" id="PRO_0000311295" description="EEF1A lysine methyltransferase 1">
    <location>
        <begin position="2"/>
        <end position="214"/>
    </location>
</feature>
<feature type="modified residue" description="N-acetylserine" evidence="1">
    <location>
        <position position="2"/>
    </location>
</feature>
<feature type="modified residue" description="Phosphoserine" evidence="1">
    <location>
        <position position="2"/>
    </location>
</feature>
<reference key="1">
    <citation type="journal article" date="2005" name="Science">
        <title>The transcriptional landscape of the mammalian genome.</title>
        <authorList>
            <person name="Carninci P."/>
            <person name="Kasukawa T."/>
            <person name="Katayama S."/>
            <person name="Gough J."/>
            <person name="Frith M.C."/>
            <person name="Maeda N."/>
            <person name="Oyama R."/>
            <person name="Ravasi T."/>
            <person name="Lenhard B."/>
            <person name="Wells C."/>
            <person name="Kodzius R."/>
            <person name="Shimokawa K."/>
            <person name="Bajic V.B."/>
            <person name="Brenner S.E."/>
            <person name="Batalov S."/>
            <person name="Forrest A.R."/>
            <person name="Zavolan M."/>
            <person name="Davis M.J."/>
            <person name="Wilming L.G."/>
            <person name="Aidinis V."/>
            <person name="Allen J.E."/>
            <person name="Ambesi-Impiombato A."/>
            <person name="Apweiler R."/>
            <person name="Aturaliya R.N."/>
            <person name="Bailey T.L."/>
            <person name="Bansal M."/>
            <person name="Baxter L."/>
            <person name="Beisel K.W."/>
            <person name="Bersano T."/>
            <person name="Bono H."/>
            <person name="Chalk A.M."/>
            <person name="Chiu K.P."/>
            <person name="Choudhary V."/>
            <person name="Christoffels A."/>
            <person name="Clutterbuck D.R."/>
            <person name="Crowe M.L."/>
            <person name="Dalla E."/>
            <person name="Dalrymple B.P."/>
            <person name="de Bono B."/>
            <person name="Della Gatta G."/>
            <person name="di Bernardo D."/>
            <person name="Down T."/>
            <person name="Engstrom P."/>
            <person name="Fagiolini M."/>
            <person name="Faulkner G."/>
            <person name="Fletcher C.F."/>
            <person name="Fukushima T."/>
            <person name="Furuno M."/>
            <person name="Futaki S."/>
            <person name="Gariboldi M."/>
            <person name="Georgii-Hemming P."/>
            <person name="Gingeras T.R."/>
            <person name="Gojobori T."/>
            <person name="Green R.E."/>
            <person name="Gustincich S."/>
            <person name="Harbers M."/>
            <person name="Hayashi Y."/>
            <person name="Hensch T.K."/>
            <person name="Hirokawa N."/>
            <person name="Hill D."/>
            <person name="Huminiecki L."/>
            <person name="Iacono M."/>
            <person name="Ikeo K."/>
            <person name="Iwama A."/>
            <person name="Ishikawa T."/>
            <person name="Jakt M."/>
            <person name="Kanapin A."/>
            <person name="Katoh M."/>
            <person name="Kawasawa Y."/>
            <person name="Kelso J."/>
            <person name="Kitamura H."/>
            <person name="Kitano H."/>
            <person name="Kollias G."/>
            <person name="Krishnan S.P."/>
            <person name="Kruger A."/>
            <person name="Kummerfeld S.K."/>
            <person name="Kurochkin I.V."/>
            <person name="Lareau L.F."/>
            <person name="Lazarevic D."/>
            <person name="Lipovich L."/>
            <person name="Liu J."/>
            <person name="Liuni S."/>
            <person name="McWilliam S."/>
            <person name="Madan Babu M."/>
            <person name="Madera M."/>
            <person name="Marchionni L."/>
            <person name="Matsuda H."/>
            <person name="Matsuzawa S."/>
            <person name="Miki H."/>
            <person name="Mignone F."/>
            <person name="Miyake S."/>
            <person name="Morris K."/>
            <person name="Mottagui-Tabar S."/>
            <person name="Mulder N."/>
            <person name="Nakano N."/>
            <person name="Nakauchi H."/>
            <person name="Ng P."/>
            <person name="Nilsson R."/>
            <person name="Nishiguchi S."/>
            <person name="Nishikawa S."/>
            <person name="Nori F."/>
            <person name="Ohara O."/>
            <person name="Okazaki Y."/>
            <person name="Orlando V."/>
            <person name="Pang K.C."/>
            <person name="Pavan W.J."/>
            <person name="Pavesi G."/>
            <person name="Pesole G."/>
            <person name="Petrovsky N."/>
            <person name="Piazza S."/>
            <person name="Reed J."/>
            <person name="Reid J.F."/>
            <person name="Ring B.Z."/>
            <person name="Ringwald M."/>
            <person name="Rost B."/>
            <person name="Ruan Y."/>
            <person name="Salzberg S.L."/>
            <person name="Sandelin A."/>
            <person name="Schneider C."/>
            <person name="Schoenbach C."/>
            <person name="Sekiguchi K."/>
            <person name="Semple C.A."/>
            <person name="Seno S."/>
            <person name="Sessa L."/>
            <person name="Sheng Y."/>
            <person name="Shibata Y."/>
            <person name="Shimada H."/>
            <person name="Shimada K."/>
            <person name="Silva D."/>
            <person name="Sinclair B."/>
            <person name="Sperling S."/>
            <person name="Stupka E."/>
            <person name="Sugiura K."/>
            <person name="Sultana R."/>
            <person name="Takenaka Y."/>
            <person name="Taki K."/>
            <person name="Tammoja K."/>
            <person name="Tan S.L."/>
            <person name="Tang S."/>
            <person name="Taylor M.S."/>
            <person name="Tegner J."/>
            <person name="Teichmann S.A."/>
            <person name="Ueda H.R."/>
            <person name="van Nimwegen E."/>
            <person name="Verardo R."/>
            <person name="Wei C.L."/>
            <person name="Yagi K."/>
            <person name="Yamanishi H."/>
            <person name="Zabarovsky E."/>
            <person name="Zhu S."/>
            <person name="Zimmer A."/>
            <person name="Hide W."/>
            <person name="Bult C."/>
            <person name="Grimmond S.M."/>
            <person name="Teasdale R.D."/>
            <person name="Liu E.T."/>
            <person name="Brusic V."/>
            <person name="Quackenbush J."/>
            <person name="Wahlestedt C."/>
            <person name="Mattick J.S."/>
            <person name="Hume D.A."/>
            <person name="Kai C."/>
            <person name="Sasaki D."/>
            <person name="Tomaru Y."/>
            <person name="Fukuda S."/>
            <person name="Kanamori-Katayama M."/>
            <person name="Suzuki M."/>
            <person name="Aoki J."/>
            <person name="Arakawa T."/>
            <person name="Iida J."/>
            <person name="Imamura K."/>
            <person name="Itoh M."/>
            <person name="Kato T."/>
            <person name="Kawaji H."/>
            <person name="Kawagashira N."/>
            <person name="Kawashima T."/>
            <person name="Kojima M."/>
            <person name="Kondo S."/>
            <person name="Konno H."/>
            <person name="Nakano K."/>
            <person name="Ninomiya N."/>
            <person name="Nishio T."/>
            <person name="Okada M."/>
            <person name="Plessy C."/>
            <person name="Shibata K."/>
            <person name="Shiraki T."/>
            <person name="Suzuki S."/>
            <person name="Tagami M."/>
            <person name="Waki K."/>
            <person name="Watahiki A."/>
            <person name="Okamura-Oho Y."/>
            <person name="Suzuki H."/>
            <person name="Kawai J."/>
            <person name="Hayashizaki Y."/>
        </authorList>
    </citation>
    <scope>NUCLEOTIDE SEQUENCE [LARGE SCALE MRNA]</scope>
    <source>
        <strain>C57BL/6J</strain>
        <tissue>Cerebellum</tissue>
        <tissue>Liver</tissue>
    </source>
</reference>
<reference key="2">
    <citation type="journal article" date="2004" name="Genome Res.">
        <title>The status, quality, and expansion of the NIH full-length cDNA project: the Mammalian Gene Collection (MGC).</title>
        <authorList>
            <consortium name="The MGC Project Team"/>
        </authorList>
    </citation>
    <scope>NUCLEOTIDE SEQUENCE [LARGE SCALE MRNA]</scope>
    <source>
        <strain>C57BL/6J</strain>
        <tissue>Brain</tissue>
    </source>
</reference>
<reference key="3">
    <citation type="journal article" date="2010" name="Cell">
        <title>A tissue-specific atlas of mouse protein phosphorylation and expression.</title>
        <authorList>
            <person name="Huttlin E.L."/>
            <person name="Jedrychowski M.P."/>
            <person name="Elias J.E."/>
            <person name="Goswami T."/>
            <person name="Rad R."/>
            <person name="Beausoleil S.A."/>
            <person name="Villen J."/>
            <person name="Haas W."/>
            <person name="Sowa M.E."/>
            <person name="Gygi S.P."/>
        </authorList>
    </citation>
    <scope>IDENTIFICATION BY MASS SPECTROMETRY [LARGE SCALE ANALYSIS]</scope>
    <source>
        <tissue>Brain</tissue>
        <tissue>Brown adipose tissue</tissue>
        <tissue>Heart</tissue>
        <tissue>Lung</tissue>
        <tissue>Spleen</tissue>
        <tissue>Testis</tissue>
    </source>
</reference>
<sequence>MSESEDDDIPQLSSHTLAALQEFYAEQKQSVNPRGDDKYNVGVIEENWQLSQFWYSQDTALRLAREAIDAAGEGGRIACVSAPSVYQKLRELCREDSSVYIFEYDRRFAIYGDEFIFYDYNHPLELPERIAAHSFDLVVADPPYLSEECLRKTSETIQFLTRGKILLCTGAIMEEQAAQLLGVKMCKFIPEHSRNLANEFRCYTNYDSGLDCEA</sequence>
<protein>
    <recommendedName>
        <fullName evidence="2 4">EEF1A lysine methyltransferase 1</fullName>
        <ecNumber evidence="2">2.1.1.-</ecNumber>
    </recommendedName>
    <alternativeName>
        <fullName evidence="2">N(6)-adenine-specific DNA methyltransferase 2</fullName>
    </alternativeName>
    <alternativeName>
        <fullName evidence="2">Protein-lysine N-methyltransferase N6amt2</fullName>
    </alternativeName>
</protein>